<gene>
    <name type="primary">RhoGAP68F</name>
    <name type="ORF">CG6811</name>
</gene>
<keyword id="KW-0217">Developmental protein</keyword>
<keyword id="KW-0306">Gastrulation</keyword>
<keyword id="KW-0343">GTPase activation</keyword>
<keyword id="KW-0597">Phosphoprotein</keyword>
<keyword id="KW-1185">Reference proteome</keyword>
<name>RG68F_DROME</name>
<protein>
    <recommendedName>
        <fullName>Rho GTPase-activating protein 68F</fullName>
    </recommendedName>
</protein>
<evidence type="ECO:0000255" key="1">
    <source>
        <dbReference type="PROSITE-ProRule" id="PRU00056"/>
    </source>
</evidence>
<evidence type="ECO:0000255" key="2">
    <source>
        <dbReference type="PROSITE-ProRule" id="PRU00172"/>
    </source>
</evidence>
<evidence type="ECO:0000256" key="3">
    <source>
        <dbReference type="SAM" id="MobiDB-lite"/>
    </source>
</evidence>
<evidence type="ECO:0000269" key="4">
    <source>
    </source>
</evidence>
<evidence type="ECO:0000269" key="5">
    <source>
    </source>
</evidence>
<evidence type="ECO:0000269" key="6">
    <source>
    </source>
</evidence>
<sequence length="476" mass="54969">MDAHSRFAPRLPGPAINPIVDNSDEPQPSLSDLHDFEPKLEFDDTELLAPSPLEKDVMVGDFVLAEDPELEPEEDVNPLEDDFEDQLREQSENFQTPRNKCDFLGTDKQGRHIFGIYASRFPEKSQLEGFVREIIKEIEPFVENDYILVYFHQGLKEDNKPSAQFLWNSYKELDRNFRKNLKTLYVVHPTWFIRVIWNFFSPFISDKFRKKLVYISSLDELRQALGLNKLKLPDNICDLDDKLNPSRKPSTPPPSSNINASRQQQHKMATTHQFGVPLKFIVMNSPCLNSIPPIVRKCVDSLSITGVIDTEGIFRRSGNHSEIMALKERVNRGEDVDLKSVNVHVIAGLLKSFLRDLAEPLLTFELYEDVTGFLDWPKEERSRNVTQLIREKLPEENYELFKYIVEFLVRVMDCEDLNKMTSSNLAIVFGPNFLWSRSTSTSLEEIAPINAFVDFVLQNHKDIYLIDVNQRTVSVD</sequence>
<comment type="function">
    <text evidence="4">Functions as a GTPase-activating protein (GAP) for RhoA/Rho1 during gastrulation by converting it to an inactive GDP-bound state.</text>
</comment>
<comment type="disruption phenotype">
    <text evidence="4">Defects during gastrulation.</text>
</comment>
<accession>Q9VTU3</accession>
<organism>
    <name type="scientific">Drosophila melanogaster</name>
    <name type="common">Fruit fly</name>
    <dbReference type="NCBI Taxonomy" id="7227"/>
    <lineage>
        <taxon>Eukaryota</taxon>
        <taxon>Metazoa</taxon>
        <taxon>Ecdysozoa</taxon>
        <taxon>Arthropoda</taxon>
        <taxon>Hexapoda</taxon>
        <taxon>Insecta</taxon>
        <taxon>Pterygota</taxon>
        <taxon>Neoptera</taxon>
        <taxon>Endopterygota</taxon>
        <taxon>Diptera</taxon>
        <taxon>Brachycera</taxon>
        <taxon>Muscomorpha</taxon>
        <taxon>Ephydroidea</taxon>
        <taxon>Drosophilidae</taxon>
        <taxon>Drosophila</taxon>
        <taxon>Sophophora</taxon>
    </lineage>
</organism>
<feature type="chain" id="PRO_0000372857" description="Rho GTPase-activating protein 68F">
    <location>
        <begin position="1"/>
        <end position="476"/>
    </location>
</feature>
<feature type="domain" description="CRAL-TRIO" evidence="1">
    <location>
        <begin position="91"/>
        <end position="244"/>
    </location>
</feature>
<feature type="domain" description="Rho-GAP" evidence="2">
    <location>
        <begin position="276"/>
        <end position="464"/>
    </location>
</feature>
<feature type="region of interest" description="Disordered" evidence="3">
    <location>
        <begin position="1"/>
        <end position="35"/>
    </location>
</feature>
<feature type="region of interest" description="Disordered" evidence="3">
    <location>
        <begin position="241"/>
        <end position="266"/>
    </location>
</feature>
<feature type="compositionally biased region" description="Polar residues" evidence="3">
    <location>
        <begin position="257"/>
        <end position="266"/>
    </location>
</feature>
<feature type="site" description="Arginine finger; crucial for GTP hydrolysis by stabilizing the transition state" evidence="2">
    <location>
        <position position="315"/>
    </location>
</feature>
<feature type="modified residue" description="Phosphoserine" evidence="5">
    <location>
        <position position="29"/>
    </location>
</feature>
<feature type="modified residue" description="Phosphoserine" evidence="5">
    <location>
        <position position="31"/>
    </location>
</feature>
<feature type="modified residue" description="Phosphothreonine" evidence="6">
    <location>
        <position position="251"/>
    </location>
</feature>
<proteinExistence type="evidence at protein level"/>
<dbReference type="EMBL" id="AE014296">
    <property type="protein sequence ID" value="AAF49953.1"/>
    <property type="molecule type" value="Genomic_DNA"/>
</dbReference>
<dbReference type="EMBL" id="AY069311">
    <property type="protein sequence ID" value="AAL39456.1"/>
    <property type="molecule type" value="mRNA"/>
</dbReference>
<dbReference type="RefSeq" id="NP_001261744.1">
    <property type="nucleotide sequence ID" value="NM_001274815.1"/>
</dbReference>
<dbReference type="RefSeq" id="NP_648552.1">
    <property type="nucleotide sequence ID" value="NM_140295.3"/>
</dbReference>
<dbReference type="SMR" id="Q9VTU3"/>
<dbReference type="BioGRID" id="64739">
    <property type="interactions" value="52"/>
</dbReference>
<dbReference type="DIP" id="DIP-23611N"/>
<dbReference type="FunCoup" id="Q9VTU3">
    <property type="interactions" value="1360"/>
</dbReference>
<dbReference type="IntAct" id="Q9VTU3">
    <property type="interactions" value="46"/>
</dbReference>
<dbReference type="STRING" id="7227.FBpp0306217"/>
<dbReference type="iPTMnet" id="Q9VTU3"/>
<dbReference type="PaxDb" id="7227-FBpp0075729"/>
<dbReference type="DNASU" id="39385"/>
<dbReference type="EnsemblMetazoa" id="FBtr0075997">
    <property type="protein sequence ID" value="FBpp0075729"/>
    <property type="gene ID" value="FBgn0036257"/>
</dbReference>
<dbReference type="EnsemblMetazoa" id="FBtr0334092">
    <property type="protein sequence ID" value="FBpp0306217"/>
    <property type="gene ID" value="FBgn0036257"/>
</dbReference>
<dbReference type="GeneID" id="39385"/>
<dbReference type="KEGG" id="dme:Dmel_CG6811"/>
<dbReference type="UCSC" id="CG6811-RA">
    <property type="organism name" value="d. melanogaster"/>
</dbReference>
<dbReference type="AGR" id="FB:FBgn0036257"/>
<dbReference type="CTD" id="39385"/>
<dbReference type="FlyBase" id="FBgn0036257">
    <property type="gene designation" value="RhoGAP68F"/>
</dbReference>
<dbReference type="VEuPathDB" id="VectorBase:FBgn0036257"/>
<dbReference type="eggNOG" id="KOG4406">
    <property type="taxonomic scope" value="Eukaryota"/>
</dbReference>
<dbReference type="GeneTree" id="ENSGT00940000165508"/>
<dbReference type="InParanoid" id="Q9VTU3"/>
<dbReference type="OMA" id="SHNPDCD"/>
<dbReference type="OrthoDB" id="19923at2759"/>
<dbReference type="PhylomeDB" id="Q9VTU3"/>
<dbReference type="Reactome" id="R-DME-8980692">
    <property type="pathway name" value="RHOA GTPase cycle"/>
</dbReference>
<dbReference type="Reactome" id="R-DME-9013026">
    <property type="pathway name" value="RHOB GTPase cycle"/>
</dbReference>
<dbReference type="Reactome" id="R-DME-9013148">
    <property type="pathway name" value="CDC42 GTPase cycle"/>
</dbReference>
<dbReference type="Reactome" id="R-DME-9013149">
    <property type="pathway name" value="RAC1 GTPase cycle"/>
</dbReference>
<dbReference type="Reactome" id="R-DME-9013404">
    <property type="pathway name" value="RAC2 GTPase cycle"/>
</dbReference>
<dbReference type="Reactome" id="R-DME-9013405">
    <property type="pathway name" value="RHOD GTPase cycle"/>
</dbReference>
<dbReference type="Reactome" id="R-DME-9013406">
    <property type="pathway name" value="RHOQ GTPase cycle"/>
</dbReference>
<dbReference type="Reactome" id="R-DME-9013408">
    <property type="pathway name" value="RHOG GTPase cycle"/>
</dbReference>
<dbReference type="Reactome" id="R-DME-9013409">
    <property type="pathway name" value="RHOJ GTPase cycle"/>
</dbReference>
<dbReference type="Reactome" id="R-DME-9013423">
    <property type="pathway name" value="RAC3 GTPase cycle"/>
</dbReference>
<dbReference type="Reactome" id="R-DME-9035034">
    <property type="pathway name" value="RHOF GTPase cycle"/>
</dbReference>
<dbReference type="SignaLink" id="Q9VTU3"/>
<dbReference type="BioGRID-ORCS" id="39385">
    <property type="hits" value="0 hits in 3 CRISPR screens"/>
</dbReference>
<dbReference type="GenomeRNAi" id="39385"/>
<dbReference type="PRO" id="PR:Q9VTU3"/>
<dbReference type="Proteomes" id="UP000000803">
    <property type="component" value="Chromosome 3L"/>
</dbReference>
<dbReference type="Bgee" id="FBgn0036257">
    <property type="expression patterns" value="Expressed in enterocyte of anterior adult midgut epithelium in digestive tract and 211 other cell types or tissues"/>
</dbReference>
<dbReference type="ExpressionAtlas" id="Q9VTU3">
    <property type="expression patterns" value="baseline and differential"/>
</dbReference>
<dbReference type="GO" id="GO:0005737">
    <property type="term" value="C:cytoplasm"/>
    <property type="evidence" value="ECO:0000318"/>
    <property type="project" value="GO_Central"/>
</dbReference>
<dbReference type="GO" id="GO:0005769">
    <property type="term" value="C:early endosome"/>
    <property type="evidence" value="ECO:0000314"/>
    <property type="project" value="FlyBase"/>
</dbReference>
<dbReference type="GO" id="GO:0055037">
    <property type="term" value="C:recycling endosome"/>
    <property type="evidence" value="ECO:0000314"/>
    <property type="project" value="FlyBase"/>
</dbReference>
<dbReference type="GO" id="GO:0005096">
    <property type="term" value="F:GTPase activator activity"/>
    <property type="evidence" value="ECO:0000314"/>
    <property type="project" value="FlyBase"/>
</dbReference>
<dbReference type="GO" id="GO:0031267">
    <property type="term" value="F:small GTPase binding"/>
    <property type="evidence" value="ECO:0000353"/>
    <property type="project" value="FlyBase"/>
</dbReference>
<dbReference type="GO" id="GO:0007480">
    <property type="term" value="P:imaginal disc-derived leg morphogenesis"/>
    <property type="evidence" value="ECO:0000315"/>
    <property type="project" value="FlyBase"/>
</dbReference>
<dbReference type="GO" id="GO:2001136">
    <property type="term" value="P:negative regulation of endocytic recycling"/>
    <property type="evidence" value="ECO:0000314"/>
    <property type="project" value="FlyBase"/>
</dbReference>
<dbReference type="GO" id="GO:0051497">
    <property type="term" value="P:negative regulation of stress fiber assembly"/>
    <property type="evidence" value="ECO:0000314"/>
    <property type="project" value="FlyBase"/>
</dbReference>
<dbReference type="GO" id="GO:0045887">
    <property type="term" value="P:positive regulation of synaptic assembly at neuromuscular junction"/>
    <property type="evidence" value="ECO:0000314"/>
    <property type="project" value="FlyBase"/>
</dbReference>
<dbReference type="GO" id="GO:0007266">
    <property type="term" value="P:Rho protein signal transduction"/>
    <property type="evidence" value="ECO:0000314"/>
    <property type="project" value="FlyBase"/>
</dbReference>
<dbReference type="GO" id="GO:0007264">
    <property type="term" value="P:small GTPase-mediated signal transduction"/>
    <property type="evidence" value="ECO:0000318"/>
    <property type="project" value="GO_Central"/>
</dbReference>
<dbReference type="GO" id="GO:0007370">
    <property type="term" value="P:ventral furrow formation"/>
    <property type="evidence" value="ECO:0000315"/>
    <property type="project" value="FlyBase"/>
</dbReference>
<dbReference type="CDD" id="cd04404">
    <property type="entry name" value="RhoGAP-p50rhoGAP"/>
    <property type="match status" value="1"/>
</dbReference>
<dbReference type="CDD" id="cd00170">
    <property type="entry name" value="SEC14"/>
    <property type="match status" value="1"/>
</dbReference>
<dbReference type="FunFam" id="1.10.555.10:FF:000024">
    <property type="entry name" value="Rho GTPase-activating protein 1"/>
    <property type="match status" value="1"/>
</dbReference>
<dbReference type="FunFam" id="3.40.525.10:FF:000016">
    <property type="entry name" value="Uncharacterized protein, isoform B"/>
    <property type="match status" value="1"/>
</dbReference>
<dbReference type="Gene3D" id="3.40.525.10">
    <property type="entry name" value="CRAL-TRIO lipid binding domain"/>
    <property type="match status" value="1"/>
</dbReference>
<dbReference type="Gene3D" id="1.10.555.10">
    <property type="entry name" value="Rho GTPase activation protein"/>
    <property type="match status" value="1"/>
</dbReference>
<dbReference type="InterPro" id="IPR049592">
    <property type="entry name" value="ARHGAP1_RhoGAP"/>
</dbReference>
<dbReference type="InterPro" id="IPR001251">
    <property type="entry name" value="CRAL-TRIO_dom"/>
</dbReference>
<dbReference type="InterPro" id="IPR036865">
    <property type="entry name" value="CRAL-TRIO_dom_sf"/>
</dbReference>
<dbReference type="InterPro" id="IPR008936">
    <property type="entry name" value="Rho_GTPase_activation_prot"/>
</dbReference>
<dbReference type="InterPro" id="IPR000198">
    <property type="entry name" value="RhoGAP_dom"/>
</dbReference>
<dbReference type="PANTHER" id="PTHR45808">
    <property type="entry name" value="RHO GTPASE-ACTIVATING PROTEIN 68F"/>
    <property type="match status" value="1"/>
</dbReference>
<dbReference type="PANTHER" id="PTHR45808:SF2">
    <property type="entry name" value="RHO GTPASE-ACTIVATING PROTEIN 68F"/>
    <property type="match status" value="1"/>
</dbReference>
<dbReference type="Pfam" id="PF13716">
    <property type="entry name" value="CRAL_TRIO_2"/>
    <property type="match status" value="1"/>
</dbReference>
<dbReference type="Pfam" id="PF00620">
    <property type="entry name" value="RhoGAP"/>
    <property type="match status" value="1"/>
</dbReference>
<dbReference type="SMART" id="SM00324">
    <property type="entry name" value="RhoGAP"/>
    <property type="match status" value="1"/>
</dbReference>
<dbReference type="SMART" id="SM00516">
    <property type="entry name" value="SEC14"/>
    <property type="match status" value="1"/>
</dbReference>
<dbReference type="SUPFAM" id="SSF52087">
    <property type="entry name" value="CRAL/TRIO domain"/>
    <property type="match status" value="1"/>
</dbReference>
<dbReference type="SUPFAM" id="SSF48350">
    <property type="entry name" value="GTPase activation domain, GAP"/>
    <property type="match status" value="1"/>
</dbReference>
<dbReference type="PROSITE" id="PS50191">
    <property type="entry name" value="CRAL_TRIO"/>
    <property type="match status" value="1"/>
</dbReference>
<dbReference type="PROSITE" id="PS50238">
    <property type="entry name" value="RHOGAP"/>
    <property type="match status" value="1"/>
</dbReference>
<reference key="1">
    <citation type="journal article" date="2000" name="Science">
        <title>The genome sequence of Drosophila melanogaster.</title>
        <authorList>
            <person name="Adams M.D."/>
            <person name="Celniker S.E."/>
            <person name="Holt R.A."/>
            <person name="Evans C.A."/>
            <person name="Gocayne J.D."/>
            <person name="Amanatides P.G."/>
            <person name="Scherer S.E."/>
            <person name="Li P.W."/>
            <person name="Hoskins R.A."/>
            <person name="Galle R.F."/>
            <person name="George R.A."/>
            <person name="Lewis S.E."/>
            <person name="Richards S."/>
            <person name="Ashburner M."/>
            <person name="Henderson S.N."/>
            <person name="Sutton G.G."/>
            <person name="Wortman J.R."/>
            <person name="Yandell M.D."/>
            <person name="Zhang Q."/>
            <person name="Chen L.X."/>
            <person name="Brandon R.C."/>
            <person name="Rogers Y.-H.C."/>
            <person name="Blazej R.G."/>
            <person name="Champe M."/>
            <person name="Pfeiffer B.D."/>
            <person name="Wan K.H."/>
            <person name="Doyle C."/>
            <person name="Baxter E.G."/>
            <person name="Helt G."/>
            <person name="Nelson C.R."/>
            <person name="Miklos G.L.G."/>
            <person name="Abril J.F."/>
            <person name="Agbayani A."/>
            <person name="An H.-J."/>
            <person name="Andrews-Pfannkoch C."/>
            <person name="Baldwin D."/>
            <person name="Ballew R.M."/>
            <person name="Basu A."/>
            <person name="Baxendale J."/>
            <person name="Bayraktaroglu L."/>
            <person name="Beasley E.M."/>
            <person name="Beeson K.Y."/>
            <person name="Benos P.V."/>
            <person name="Berman B.P."/>
            <person name="Bhandari D."/>
            <person name="Bolshakov S."/>
            <person name="Borkova D."/>
            <person name="Botchan M.R."/>
            <person name="Bouck J."/>
            <person name="Brokstein P."/>
            <person name="Brottier P."/>
            <person name="Burtis K.C."/>
            <person name="Busam D.A."/>
            <person name="Butler H."/>
            <person name="Cadieu E."/>
            <person name="Center A."/>
            <person name="Chandra I."/>
            <person name="Cherry J.M."/>
            <person name="Cawley S."/>
            <person name="Dahlke C."/>
            <person name="Davenport L.B."/>
            <person name="Davies P."/>
            <person name="de Pablos B."/>
            <person name="Delcher A."/>
            <person name="Deng Z."/>
            <person name="Mays A.D."/>
            <person name="Dew I."/>
            <person name="Dietz S.M."/>
            <person name="Dodson K."/>
            <person name="Doup L.E."/>
            <person name="Downes M."/>
            <person name="Dugan-Rocha S."/>
            <person name="Dunkov B.C."/>
            <person name="Dunn P."/>
            <person name="Durbin K.J."/>
            <person name="Evangelista C.C."/>
            <person name="Ferraz C."/>
            <person name="Ferriera S."/>
            <person name="Fleischmann W."/>
            <person name="Fosler C."/>
            <person name="Gabrielian A.E."/>
            <person name="Garg N.S."/>
            <person name="Gelbart W.M."/>
            <person name="Glasser K."/>
            <person name="Glodek A."/>
            <person name="Gong F."/>
            <person name="Gorrell J.H."/>
            <person name="Gu Z."/>
            <person name="Guan P."/>
            <person name="Harris M."/>
            <person name="Harris N.L."/>
            <person name="Harvey D.A."/>
            <person name="Heiman T.J."/>
            <person name="Hernandez J.R."/>
            <person name="Houck J."/>
            <person name="Hostin D."/>
            <person name="Houston K.A."/>
            <person name="Howland T.J."/>
            <person name="Wei M.-H."/>
            <person name="Ibegwam C."/>
            <person name="Jalali M."/>
            <person name="Kalush F."/>
            <person name="Karpen G.H."/>
            <person name="Ke Z."/>
            <person name="Kennison J.A."/>
            <person name="Ketchum K.A."/>
            <person name="Kimmel B.E."/>
            <person name="Kodira C.D."/>
            <person name="Kraft C.L."/>
            <person name="Kravitz S."/>
            <person name="Kulp D."/>
            <person name="Lai Z."/>
            <person name="Lasko P."/>
            <person name="Lei Y."/>
            <person name="Levitsky A.A."/>
            <person name="Li J.H."/>
            <person name="Li Z."/>
            <person name="Liang Y."/>
            <person name="Lin X."/>
            <person name="Liu X."/>
            <person name="Mattei B."/>
            <person name="McIntosh T.C."/>
            <person name="McLeod M.P."/>
            <person name="McPherson D."/>
            <person name="Merkulov G."/>
            <person name="Milshina N.V."/>
            <person name="Mobarry C."/>
            <person name="Morris J."/>
            <person name="Moshrefi A."/>
            <person name="Mount S.M."/>
            <person name="Moy M."/>
            <person name="Murphy B."/>
            <person name="Murphy L."/>
            <person name="Muzny D.M."/>
            <person name="Nelson D.L."/>
            <person name="Nelson D.R."/>
            <person name="Nelson K.A."/>
            <person name="Nixon K."/>
            <person name="Nusskern D.R."/>
            <person name="Pacleb J.M."/>
            <person name="Palazzolo M."/>
            <person name="Pittman G.S."/>
            <person name="Pan S."/>
            <person name="Pollard J."/>
            <person name="Puri V."/>
            <person name="Reese M.G."/>
            <person name="Reinert K."/>
            <person name="Remington K."/>
            <person name="Saunders R.D.C."/>
            <person name="Scheeler F."/>
            <person name="Shen H."/>
            <person name="Shue B.C."/>
            <person name="Siden-Kiamos I."/>
            <person name="Simpson M."/>
            <person name="Skupski M.P."/>
            <person name="Smith T.J."/>
            <person name="Spier E."/>
            <person name="Spradling A.C."/>
            <person name="Stapleton M."/>
            <person name="Strong R."/>
            <person name="Sun E."/>
            <person name="Svirskas R."/>
            <person name="Tector C."/>
            <person name="Turner R."/>
            <person name="Venter E."/>
            <person name="Wang A.H."/>
            <person name="Wang X."/>
            <person name="Wang Z.-Y."/>
            <person name="Wassarman D.A."/>
            <person name="Weinstock G.M."/>
            <person name="Weissenbach J."/>
            <person name="Williams S.M."/>
            <person name="Woodage T."/>
            <person name="Worley K.C."/>
            <person name="Wu D."/>
            <person name="Yang S."/>
            <person name="Yao Q.A."/>
            <person name="Ye J."/>
            <person name="Yeh R.-F."/>
            <person name="Zaveri J.S."/>
            <person name="Zhan M."/>
            <person name="Zhang G."/>
            <person name="Zhao Q."/>
            <person name="Zheng L."/>
            <person name="Zheng X.H."/>
            <person name="Zhong F.N."/>
            <person name="Zhong W."/>
            <person name="Zhou X."/>
            <person name="Zhu S.C."/>
            <person name="Zhu X."/>
            <person name="Smith H.O."/>
            <person name="Gibbs R.A."/>
            <person name="Myers E.W."/>
            <person name="Rubin G.M."/>
            <person name="Venter J.C."/>
        </authorList>
    </citation>
    <scope>NUCLEOTIDE SEQUENCE [LARGE SCALE GENOMIC DNA]</scope>
    <source>
        <strain>Berkeley</strain>
    </source>
</reference>
<reference key="2">
    <citation type="journal article" date="2002" name="Genome Biol.">
        <title>Annotation of the Drosophila melanogaster euchromatic genome: a systematic review.</title>
        <authorList>
            <person name="Misra S."/>
            <person name="Crosby M.A."/>
            <person name="Mungall C.J."/>
            <person name="Matthews B.B."/>
            <person name="Campbell K.S."/>
            <person name="Hradecky P."/>
            <person name="Huang Y."/>
            <person name="Kaminker J.S."/>
            <person name="Millburn G.H."/>
            <person name="Prochnik S.E."/>
            <person name="Smith C.D."/>
            <person name="Tupy J.L."/>
            <person name="Whitfield E.J."/>
            <person name="Bayraktaroglu L."/>
            <person name="Berman B.P."/>
            <person name="Bettencourt B.R."/>
            <person name="Celniker S.E."/>
            <person name="de Grey A.D.N.J."/>
            <person name="Drysdale R.A."/>
            <person name="Harris N.L."/>
            <person name="Richter J."/>
            <person name="Russo S."/>
            <person name="Schroeder A.J."/>
            <person name="Shu S.Q."/>
            <person name="Stapleton M."/>
            <person name="Yamada C."/>
            <person name="Ashburner M."/>
            <person name="Gelbart W.M."/>
            <person name="Rubin G.M."/>
            <person name="Lewis S.E."/>
        </authorList>
    </citation>
    <scope>GENOME REANNOTATION</scope>
    <source>
        <strain>Berkeley</strain>
    </source>
</reference>
<reference key="3">
    <citation type="journal article" date="2002" name="Genome Biol.">
        <title>A Drosophila full-length cDNA resource.</title>
        <authorList>
            <person name="Stapleton M."/>
            <person name="Carlson J.W."/>
            <person name="Brokstein P."/>
            <person name="Yu C."/>
            <person name="Champe M."/>
            <person name="George R.A."/>
            <person name="Guarin H."/>
            <person name="Kronmiller B."/>
            <person name="Pacleb J.M."/>
            <person name="Park S."/>
            <person name="Wan K.H."/>
            <person name="Rubin G.M."/>
            <person name="Celniker S.E."/>
        </authorList>
    </citation>
    <scope>NUCLEOTIDE SEQUENCE [LARGE SCALE MRNA]</scope>
    <source>
        <strain>Berkeley</strain>
        <tissue>Embryo</tissue>
    </source>
</reference>
<reference key="4">
    <citation type="journal article" date="2006" name="Dev. Genes Evol.">
        <title>Drosophila RhoGAP68F is a putative GTPase activating protein for RhoA participating in gastrulation.</title>
        <authorList>
            <person name="Sanny J."/>
            <person name="Chui V."/>
            <person name="Langmann C."/>
            <person name="Pereira C."/>
            <person name="Zahedi B."/>
            <person name="Harden N."/>
        </authorList>
    </citation>
    <scope>FUNCTION</scope>
    <scope>DISRUPTION PHENOTYPE</scope>
</reference>
<reference key="5">
    <citation type="journal article" date="2007" name="Mol. Biosyst.">
        <title>An integrated chemical, mass spectrometric and computational strategy for (quantitative) phosphoproteomics: application to Drosophila melanogaster Kc167 cells.</title>
        <authorList>
            <person name="Bodenmiller B."/>
            <person name="Mueller L.N."/>
            <person name="Pedrioli P.G.A."/>
            <person name="Pflieger D."/>
            <person name="Juenger M.A."/>
            <person name="Eng J.K."/>
            <person name="Aebersold R."/>
            <person name="Tao W.A."/>
        </authorList>
    </citation>
    <scope>PHOSPHORYLATION [LARGE SCALE ANALYSIS] AT SER-29 AND SER-31</scope>
    <scope>IDENTIFICATION BY MASS SPECTROMETRY</scope>
</reference>
<reference key="6">
    <citation type="journal article" date="2008" name="J. Proteome Res.">
        <title>Phosphoproteome analysis of Drosophila melanogaster embryos.</title>
        <authorList>
            <person name="Zhai B."/>
            <person name="Villen J."/>
            <person name="Beausoleil S.A."/>
            <person name="Mintseris J."/>
            <person name="Gygi S.P."/>
        </authorList>
    </citation>
    <scope>PHOSPHORYLATION [LARGE SCALE ANALYSIS] AT THR-251</scope>
    <scope>IDENTIFICATION BY MASS SPECTROMETRY</scope>
    <source>
        <tissue>Embryo</tissue>
    </source>
</reference>